<accession>Q1IG17</accession>
<protein>
    <recommendedName>
        <fullName evidence="1">LPS-assembly protein LptD</fullName>
    </recommendedName>
</protein>
<dbReference type="EMBL" id="CT573326">
    <property type="protein sequence ID" value="CAK13385.1"/>
    <property type="molecule type" value="Genomic_DNA"/>
</dbReference>
<dbReference type="RefSeq" id="WP_011531842.1">
    <property type="nucleotide sequence ID" value="NC_008027.1"/>
</dbReference>
<dbReference type="SMR" id="Q1IG17"/>
<dbReference type="STRING" id="384676.PSEEN0431"/>
<dbReference type="GeneID" id="32803766"/>
<dbReference type="KEGG" id="pen:PSEEN0431"/>
<dbReference type="eggNOG" id="COG1452">
    <property type="taxonomic scope" value="Bacteria"/>
</dbReference>
<dbReference type="HOGENOM" id="CLU_009039_1_0_6"/>
<dbReference type="OrthoDB" id="9760225at2"/>
<dbReference type="Proteomes" id="UP000000658">
    <property type="component" value="Chromosome"/>
</dbReference>
<dbReference type="GO" id="GO:0009279">
    <property type="term" value="C:cell outer membrane"/>
    <property type="evidence" value="ECO:0007669"/>
    <property type="project" value="UniProtKB-SubCell"/>
</dbReference>
<dbReference type="GO" id="GO:1990351">
    <property type="term" value="C:transporter complex"/>
    <property type="evidence" value="ECO:0007669"/>
    <property type="project" value="TreeGrafter"/>
</dbReference>
<dbReference type="GO" id="GO:0043165">
    <property type="term" value="P:Gram-negative-bacterium-type cell outer membrane assembly"/>
    <property type="evidence" value="ECO:0007669"/>
    <property type="project" value="UniProtKB-UniRule"/>
</dbReference>
<dbReference type="GO" id="GO:0015920">
    <property type="term" value="P:lipopolysaccharide transport"/>
    <property type="evidence" value="ECO:0007669"/>
    <property type="project" value="InterPro"/>
</dbReference>
<dbReference type="Gene3D" id="2.60.450.10">
    <property type="entry name" value="Lipopolysaccharide (LPS) transport protein A like domain"/>
    <property type="match status" value="1"/>
</dbReference>
<dbReference type="HAMAP" id="MF_01411">
    <property type="entry name" value="LPS_assembly_LptD"/>
    <property type="match status" value="1"/>
</dbReference>
<dbReference type="InterPro" id="IPR020889">
    <property type="entry name" value="LipoPS_assembly_LptD"/>
</dbReference>
<dbReference type="InterPro" id="IPR050218">
    <property type="entry name" value="LptD"/>
</dbReference>
<dbReference type="InterPro" id="IPR007543">
    <property type="entry name" value="LptD_C"/>
</dbReference>
<dbReference type="InterPro" id="IPR005653">
    <property type="entry name" value="OstA-like_N"/>
</dbReference>
<dbReference type="PANTHER" id="PTHR30189">
    <property type="entry name" value="LPS-ASSEMBLY PROTEIN"/>
    <property type="match status" value="1"/>
</dbReference>
<dbReference type="PANTHER" id="PTHR30189:SF1">
    <property type="entry name" value="LPS-ASSEMBLY PROTEIN LPTD"/>
    <property type="match status" value="1"/>
</dbReference>
<dbReference type="Pfam" id="PF04453">
    <property type="entry name" value="LptD"/>
    <property type="match status" value="1"/>
</dbReference>
<dbReference type="Pfam" id="PF03968">
    <property type="entry name" value="LptD_N"/>
    <property type="match status" value="1"/>
</dbReference>
<reference key="1">
    <citation type="journal article" date="2006" name="Nat. Biotechnol.">
        <title>Complete genome sequence of the entomopathogenic and metabolically versatile soil bacterium Pseudomonas entomophila.</title>
        <authorList>
            <person name="Vodovar N."/>
            <person name="Vallenet D."/>
            <person name="Cruveiller S."/>
            <person name="Rouy Z."/>
            <person name="Barbe V."/>
            <person name="Acosta C."/>
            <person name="Cattolico L."/>
            <person name="Jubin C."/>
            <person name="Lajus A."/>
            <person name="Segurens B."/>
            <person name="Vacherie B."/>
            <person name="Wincker P."/>
            <person name="Weissenbach J."/>
            <person name="Lemaitre B."/>
            <person name="Medigue C."/>
            <person name="Boccard F."/>
        </authorList>
    </citation>
    <scope>NUCLEOTIDE SEQUENCE [LARGE SCALE GENOMIC DNA]</scope>
    <source>
        <strain>L48</strain>
    </source>
</reference>
<gene>
    <name evidence="1" type="primary">lptD</name>
    <name type="synonym">imp</name>
    <name type="synonym">ostA</name>
    <name type="ordered locus">PSEEN0431</name>
</gene>
<evidence type="ECO:0000255" key="1">
    <source>
        <dbReference type="HAMAP-Rule" id="MF_01411"/>
    </source>
</evidence>
<evidence type="ECO:0000256" key="2">
    <source>
        <dbReference type="SAM" id="MobiDB-lite"/>
    </source>
</evidence>
<comment type="function">
    <text evidence="1">Together with LptE, is involved in the assembly of lipopolysaccharide (LPS) at the surface of the outer membrane.</text>
</comment>
<comment type="subunit">
    <text evidence="1">Component of the lipopolysaccharide transport and assembly complex. Interacts with LptE and LptA.</text>
</comment>
<comment type="subcellular location">
    <subcellularLocation>
        <location evidence="1">Cell outer membrane</location>
    </subcellularLocation>
</comment>
<comment type="similarity">
    <text evidence="1">Belongs to the LptD family.</text>
</comment>
<proteinExistence type="inferred from homology"/>
<keyword id="KW-0998">Cell outer membrane</keyword>
<keyword id="KW-0472">Membrane</keyword>
<keyword id="KW-0732">Signal</keyword>
<sequence length="944" mass="106720">MALKSPAFRRKFPLLVTGGLLALQPLATSFVVAAEQFDCQVSAAGGWDCKPKATGNLPPRPVHPGAAAASSGAEAPGEVGEAQAEKPMLVTESKGRGLKSRSEDYSHLDWVPREKLTAAQLAETGPYCGGAYIEPTRPGMNDTTPKDESPTYINAKVSKYQQEQQIATLAGDVVMRQGSMQAEADEANLYQAENRGELKGNVKIRDNGSLVVGDEAQIQLDTGEARVDNAEYVMHKSHIRGNALYAKRAENAIIRLKDGTYTTCEPGSNAWQLKGNNITLNPATGFGTATNVTLRVKDFPVLYTPYIYFPIDDRRQSGFLPPSFSTSSDTGFMLVTPYYFNLAPNYDATLYPRYMAKRGMLMEGEFRYLTKSSEGQFGGAYLNDESDDRKLQTDYKKERWMVNWQHKGGLDERLMTEVDYTDISDPFYFQDLETDQIGVEKRDFVNQQGALNYRGDNYTARLNVHAYEMATISQITPYDKLPQVTFNGTLPFHPSGLDFGYETEAVRFERDLKNDLVFDKDGKPDESIGVVKDANGEVIGGRRIDESLRGIARANGTRLNAAPSISLPMEASYGFLTPKLKYVYTHYDLDLNSRGQAQAAQDSANPAYGTYNSAINRNVPIFSVDSGLYFDRNTQLFGTNYRQTLEPRLFYLYVPYKDQRDIPLFDTGETLFNYASLFRDNRFAGTDRIGDENKLSLGVTNRWIEDNGFQRQRFSIGQAYYFKDRKVQLPGIDYRTRKDSQSDVSPYALEYEYAFNRDWRFNSDFNWDPDSRSTRSGSAMFHYQPEDNPNKIVNLGYRYRNDTITYDSLTGAWKVGGGDYGSPGDANYIKDYYKIQQHDFSVIWPIVPQWSVIARWQHDYNRNRTLEAMGGFEYDSCCWKLRLINRYWLDYDDFSQATPTNEKGDHGVFLQVVLKGLGGVVGNKVESFLDQGIQGYRTREEQAY</sequence>
<name>LPTD_PSEE4</name>
<feature type="signal peptide" evidence="1">
    <location>
        <begin position="1"/>
        <end position="33"/>
    </location>
</feature>
<feature type="chain" id="PRO_0000281625" description="LPS-assembly protein LptD">
    <location>
        <begin position="34"/>
        <end position="944"/>
    </location>
</feature>
<feature type="region of interest" description="Disordered" evidence="2">
    <location>
        <begin position="52"/>
        <end position="102"/>
    </location>
</feature>
<feature type="compositionally biased region" description="Low complexity" evidence="2">
    <location>
        <begin position="64"/>
        <end position="82"/>
    </location>
</feature>
<organism>
    <name type="scientific">Pseudomonas entomophila (strain L48)</name>
    <dbReference type="NCBI Taxonomy" id="384676"/>
    <lineage>
        <taxon>Bacteria</taxon>
        <taxon>Pseudomonadati</taxon>
        <taxon>Pseudomonadota</taxon>
        <taxon>Gammaproteobacteria</taxon>
        <taxon>Pseudomonadales</taxon>
        <taxon>Pseudomonadaceae</taxon>
        <taxon>Pseudomonas</taxon>
    </lineage>
</organism>